<keyword id="KW-0002">3D-structure</keyword>
<keyword id="KW-0025">Alternative splicing</keyword>
<keyword id="KW-1015">Disulfide bond</keyword>
<keyword id="KW-0325">Glycoprotein</keyword>
<keyword id="KW-0378">Hydrolase</keyword>
<keyword id="KW-0391">Immunity</keyword>
<keyword id="KW-0393">Immunoglobulin domain</keyword>
<keyword id="KW-0395">Inflammatory response</keyword>
<keyword id="KW-0399">Innate immunity</keyword>
<keyword id="KW-0472">Membrane</keyword>
<keyword id="KW-0520">NAD</keyword>
<keyword id="KW-1267">Proteomics identification</keyword>
<keyword id="KW-0675">Receptor</keyword>
<keyword id="KW-1185">Reference proteome</keyword>
<keyword id="KW-0677">Repeat</keyword>
<keyword id="KW-0732">Signal</keyword>
<keyword id="KW-0812">Transmembrane</keyword>
<keyword id="KW-1133">Transmembrane helix</keyword>
<proteinExistence type="evidence at protein level"/>
<accession>Q9HB29</accession>
<accession>A4FU63</accession>
<accession>Q13525</accession>
<accession>Q45H74</accession>
<accession>Q53TU8</accession>
<accession>Q587I8</accession>
<name>ILRL2_HUMAN</name>
<protein>
    <recommendedName>
        <fullName>Interleukin-1 receptor-like 2</fullName>
        <ecNumber evidence="4">3.2.2.6</ecNumber>
    </recommendedName>
    <alternativeName>
        <fullName>IL-36 receptor</fullName>
        <shortName>IL-36R</shortName>
    </alternativeName>
    <alternativeName>
        <fullName>Interleukin-1 receptor-related protein 2</fullName>
        <shortName>IL-1Rrp2</shortName>
        <shortName>IL1R-rp2</shortName>
    </alternativeName>
</protein>
<comment type="function">
    <text evidence="1 5">Receptor for interleukin-36 (IL36A, IL36B and IL36G). After binding to interleukin-36 associates with the coreceptor IL1RAP to form the interleukin-36 receptor complex which mediates interleukin-36-dependent activation of NF-kappa-B, MAPK and other pathways (By similarity). The IL-36 signaling system is thought to be present in epithelial barriers and to take part in local inflammatory response; it is similar to the IL-1 system. Seems to be involved in skin inflammatory response by induction of the IL-23/IL-17/IL-22 pathway.</text>
</comment>
<comment type="catalytic activity">
    <reaction evidence="4">
        <text>NAD(+) + H2O = ADP-D-ribose + nicotinamide + H(+)</text>
        <dbReference type="Rhea" id="RHEA:16301"/>
        <dbReference type="ChEBI" id="CHEBI:15377"/>
        <dbReference type="ChEBI" id="CHEBI:15378"/>
        <dbReference type="ChEBI" id="CHEBI:17154"/>
        <dbReference type="ChEBI" id="CHEBI:57540"/>
        <dbReference type="ChEBI" id="CHEBI:57967"/>
        <dbReference type="EC" id="3.2.2.6"/>
    </reaction>
    <physiologicalReaction direction="left-to-right" evidence="4">
        <dbReference type="Rhea" id="RHEA:16302"/>
    </physiologicalReaction>
</comment>
<comment type="subunit">
    <text evidence="1">Interacts with IL1RAP; the association is enhanced by IL36B indicative for an functional signaling complex and inhibited by IL36RN (By similarity).</text>
</comment>
<comment type="subcellular location">
    <subcellularLocation>
        <location>Membrane</location>
        <topology evidence="7">Single-pass type I membrane protein</topology>
    </subcellularLocation>
</comment>
<comment type="alternative products">
    <event type="alternative splicing"/>
    <isoform>
        <id>Q9HB29-1</id>
        <name>1</name>
        <sequence type="displayed"/>
    </isoform>
    <isoform>
        <id>Q9HB29-2</id>
        <name>2</name>
        <sequence type="described" ref="VSP_056292 VSP_056293 VSP_056294"/>
    </isoform>
</comment>
<comment type="tissue specificity">
    <text evidence="6 7">Expressed in synovial fibroblasts and articular chondrocytes. Expressed in keratinocytes and monocyte-derived dendritic cells. Expressed in monocytes and myeloid dendritic cells; at protein level.</text>
</comment>
<comment type="domain">
    <text evidence="4">The TIR domain mediates NAD(+) hydrolase (NADase) activity. Self-association of TIR domains is required for NADase activity.</text>
</comment>
<comment type="similarity">
    <text evidence="10">Belongs to the interleukin-1 receptor family.</text>
</comment>
<comment type="sequence caution" evidence="10">
    <conflict type="frameshift">
        <sequence resource="EMBL-CDS" id="AAB53237"/>
    </conflict>
</comment>
<organism>
    <name type="scientific">Homo sapiens</name>
    <name type="common">Human</name>
    <dbReference type="NCBI Taxonomy" id="9606"/>
    <lineage>
        <taxon>Eukaryota</taxon>
        <taxon>Metazoa</taxon>
        <taxon>Chordata</taxon>
        <taxon>Craniata</taxon>
        <taxon>Vertebrata</taxon>
        <taxon>Euteleostomi</taxon>
        <taxon>Mammalia</taxon>
        <taxon>Eutheria</taxon>
        <taxon>Euarchontoglires</taxon>
        <taxon>Primates</taxon>
        <taxon>Haplorrhini</taxon>
        <taxon>Catarrhini</taxon>
        <taxon>Hominidae</taxon>
        <taxon>Homo</taxon>
    </lineage>
</organism>
<gene>
    <name type="primary">IL1RL2</name>
    <name type="synonym">IL1RRP2</name>
</gene>
<evidence type="ECO:0000250" key="1">
    <source>
        <dbReference type="UniProtKB" id="Q9ERS7"/>
    </source>
</evidence>
<evidence type="ECO:0000255" key="2"/>
<evidence type="ECO:0000255" key="3">
    <source>
        <dbReference type="PROSITE-ProRule" id="PRU00114"/>
    </source>
</evidence>
<evidence type="ECO:0000255" key="4">
    <source>
        <dbReference type="PROSITE-ProRule" id="PRU00204"/>
    </source>
</evidence>
<evidence type="ECO:0000269" key="5">
    <source>
    </source>
</evidence>
<evidence type="ECO:0000269" key="6">
    <source>
    </source>
</evidence>
<evidence type="ECO:0000269" key="7">
    <source>
    </source>
</evidence>
<evidence type="ECO:0000269" key="8">
    <source ref="3"/>
</evidence>
<evidence type="ECO:0000303" key="9">
    <source>
    </source>
</evidence>
<evidence type="ECO:0000305" key="10"/>
<evidence type="ECO:0007829" key="11">
    <source>
        <dbReference type="PDB" id="6U6U"/>
    </source>
</evidence>
<reference key="1">
    <citation type="journal article" date="2000" name="J. Biol. Chem.">
        <title>Identification and characterization of two members of a novel class of the interleukin-1 receptor (IL-1R) family. Delineation of a new class of IL-1R-related proteins based on signaling.</title>
        <authorList>
            <person name="Born T.L."/>
            <person name="Smith D.E."/>
            <person name="Garka K.E."/>
            <person name="Renshaw B.R."/>
            <person name="Bertles J.S."/>
            <person name="Sims J.E."/>
        </authorList>
    </citation>
    <scope>NUCLEOTIDE SEQUENCE [MRNA] (ISOFORM 1)</scope>
</reference>
<reference key="2">
    <citation type="journal article" date="1996" name="J. Neuroimmunol.">
        <title>Cloning of a cDNA encoding a novel interleukin-1 receptor related protein (IL1R-rp2).</title>
        <authorList>
            <person name="Lovenberg T.W."/>
            <person name="Crowe P.D."/>
            <person name="Liu C."/>
            <person name="Chalmers D.T."/>
            <person name="Liu X.-J."/>
            <person name="Liaw C."/>
            <person name="Clevenger W."/>
            <person name="Oltersdorf T."/>
            <person name="De Souza E.B."/>
            <person name="Maki R.A."/>
        </authorList>
    </citation>
    <scope>NUCLEOTIDE SEQUENCE [MRNA] (ISOFORM 1)</scope>
</reference>
<reference key="3">
    <citation type="submission" date="2005-07" db="EMBL/GenBank/DDBJ databases">
        <authorList>
            <consortium name="SeattleSNPs variation discovery resource"/>
        </authorList>
    </citation>
    <scope>NUCLEOTIDE SEQUENCE [GENOMIC DNA]</scope>
    <scope>VARIANTS ILE-352 AND PRO-550</scope>
</reference>
<reference key="4">
    <citation type="journal article" date="2005" name="Nature">
        <title>Generation and annotation of the DNA sequences of human chromosomes 2 and 4.</title>
        <authorList>
            <person name="Hillier L.W."/>
            <person name="Graves T.A."/>
            <person name="Fulton R.S."/>
            <person name="Fulton L.A."/>
            <person name="Pepin K.H."/>
            <person name="Minx P."/>
            <person name="Wagner-McPherson C."/>
            <person name="Layman D."/>
            <person name="Wylie K."/>
            <person name="Sekhon M."/>
            <person name="Becker M.C."/>
            <person name="Fewell G.A."/>
            <person name="Delehaunty K.D."/>
            <person name="Miner T.L."/>
            <person name="Nash W.E."/>
            <person name="Kremitzki C."/>
            <person name="Oddy L."/>
            <person name="Du H."/>
            <person name="Sun H."/>
            <person name="Bradshaw-Cordum H."/>
            <person name="Ali J."/>
            <person name="Carter J."/>
            <person name="Cordes M."/>
            <person name="Harris A."/>
            <person name="Isak A."/>
            <person name="van Brunt A."/>
            <person name="Nguyen C."/>
            <person name="Du F."/>
            <person name="Courtney L."/>
            <person name="Kalicki J."/>
            <person name="Ozersky P."/>
            <person name="Abbott S."/>
            <person name="Armstrong J."/>
            <person name="Belter E.A."/>
            <person name="Caruso L."/>
            <person name="Cedroni M."/>
            <person name="Cotton M."/>
            <person name="Davidson T."/>
            <person name="Desai A."/>
            <person name="Elliott G."/>
            <person name="Erb T."/>
            <person name="Fronick C."/>
            <person name="Gaige T."/>
            <person name="Haakenson W."/>
            <person name="Haglund K."/>
            <person name="Holmes A."/>
            <person name="Harkins R."/>
            <person name="Kim K."/>
            <person name="Kruchowski S.S."/>
            <person name="Strong C.M."/>
            <person name="Grewal N."/>
            <person name="Goyea E."/>
            <person name="Hou S."/>
            <person name="Levy A."/>
            <person name="Martinka S."/>
            <person name="Mead K."/>
            <person name="McLellan M.D."/>
            <person name="Meyer R."/>
            <person name="Randall-Maher J."/>
            <person name="Tomlinson C."/>
            <person name="Dauphin-Kohlberg S."/>
            <person name="Kozlowicz-Reilly A."/>
            <person name="Shah N."/>
            <person name="Swearengen-Shahid S."/>
            <person name="Snider J."/>
            <person name="Strong J.T."/>
            <person name="Thompson J."/>
            <person name="Yoakum M."/>
            <person name="Leonard S."/>
            <person name="Pearman C."/>
            <person name="Trani L."/>
            <person name="Radionenko M."/>
            <person name="Waligorski J.E."/>
            <person name="Wang C."/>
            <person name="Rock S.M."/>
            <person name="Tin-Wollam A.-M."/>
            <person name="Maupin R."/>
            <person name="Latreille P."/>
            <person name="Wendl M.C."/>
            <person name="Yang S.-P."/>
            <person name="Pohl C."/>
            <person name="Wallis J.W."/>
            <person name="Spieth J."/>
            <person name="Bieri T.A."/>
            <person name="Berkowicz N."/>
            <person name="Nelson J.O."/>
            <person name="Osborne J."/>
            <person name="Ding L."/>
            <person name="Meyer R."/>
            <person name="Sabo A."/>
            <person name="Shotland Y."/>
            <person name="Sinha P."/>
            <person name="Wohldmann P.E."/>
            <person name="Cook L.L."/>
            <person name="Hickenbotham M.T."/>
            <person name="Eldred J."/>
            <person name="Williams D."/>
            <person name="Jones T.A."/>
            <person name="She X."/>
            <person name="Ciccarelli F.D."/>
            <person name="Izaurralde E."/>
            <person name="Taylor J."/>
            <person name="Schmutz J."/>
            <person name="Myers R.M."/>
            <person name="Cox D.R."/>
            <person name="Huang X."/>
            <person name="McPherson J.D."/>
            <person name="Mardis E.R."/>
            <person name="Clifton S.W."/>
            <person name="Warren W.C."/>
            <person name="Chinwalla A.T."/>
            <person name="Eddy S.R."/>
            <person name="Marra M.A."/>
            <person name="Ovcharenko I."/>
            <person name="Furey T.S."/>
            <person name="Miller W."/>
            <person name="Eichler E.E."/>
            <person name="Bork P."/>
            <person name="Suyama M."/>
            <person name="Torrents D."/>
            <person name="Waterston R.H."/>
            <person name="Wilson R.K."/>
        </authorList>
    </citation>
    <scope>NUCLEOTIDE SEQUENCE [LARGE SCALE GENOMIC DNA]</scope>
</reference>
<reference key="5">
    <citation type="journal article" date="2004" name="Genome Res.">
        <title>The status, quality, and expansion of the NIH full-length cDNA project: the Mammalian Gene Collection (MGC).</title>
        <authorList>
            <consortium name="The MGC Project Team"/>
        </authorList>
    </citation>
    <scope>NUCLEOTIDE SEQUENCE [LARGE SCALE MRNA] (ISOFORM 2)</scope>
</reference>
<reference key="6">
    <citation type="journal article" date="2001" name="J. Immunol.">
        <title>Two novel IL-1 family members, IL-1 delta and IL-1 epsilon, function as an antagonist and agonist of NF-kappa B activation through the orphan IL-1 receptor-related protein 2.</title>
        <authorList>
            <person name="Debets R."/>
            <person name="Timans J.C."/>
            <person name="Homey B."/>
            <person name="Zurawski S."/>
            <person name="Sana T.R."/>
            <person name="Lo S."/>
            <person name="Wagner J."/>
            <person name="Edwards G."/>
            <person name="Clifford T."/>
            <person name="Menon S."/>
            <person name="Bazan J.F."/>
            <person name="Kastelein R.A."/>
        </authorList>
    </citation>
    <scope>FUNCTION AS RECEPTOR FOR IL36G</scope>
</reference>
<reference key="7">
    <citation type="journal article" date="2006" name="Arthritis Res. Ther.">
        <title>The new IL-1 family member IL-1F8 stimulates production of inflammatory mediators by synovial fibroblasts and articular chondrocytes.</title>
        <authorList>
            <person name="Magne D."/>
            <person name="Palmer G."/>
            <person name="Barton J.L."/>
            <person name="Mezin F."/>
            <person name="Talabot-Ayer D."/>
            <person name="Bas S."/>
            <person name="Duffy T."/>
            <person name="Noger M."/>
            <person name="Guerne P.A."/>
            <person name="Nicklin M.J."/>
            <person name="Gabay C."/>
        </authorList>
    </citation>
    <scope>TISSUE SPECIFICITY</scope>
</reference>
<reference key="8">
    <citation type="journal article" date="2014" name="J. Immunol.">
        <title>IL-36 promotes myeloid cell infiltration, activation, and inflammatory activity in skin.</title>
        <authorList>
            <person name="Foster A.M."/>
            <person name="Baliwag J."/>
            <person name="Chen C.S."/>
            <person name="Guzman A.M."/>
            <person name="Stoll S.W."/>
            <person name="Gudjonsson J.E."/>
            <person name="Ward N.L."/>
            <person name="Johnston A."/>
        </authorList>
    </citation>
    <scope>TISSUE SPECIFICITY</scope>
    <scope>SUBCELLULAR LOCATION</scope>
</reference>
<sequence length="575" mass="65405">MWSLLLCGLSIALPLSVTADGCKDIFMKNEILSASQPFAFNCTFPPITSGEVSVTWYKNSSKIPVSKIIQSRIHQDETWILFLPMEWGDSGVYQCVIKGRDSCHRIHVNLTVFEKHWCDTSIGGLPNLSDEYKQILHLGKDDSLTCHLHFPKSCVLGPIKWYKDCNEIKGERFTVLETRLLVSNVSAEDRGNYACQAILTHSGKQYEVLNGITVSITERAGYGGSVPKIIYPKNHSIEVQLGTTLIVDCNVTDTKDNTNLRCWRVNNTLVDDYYDESKRIREGVETHVSFREHNLYTVNITFLEVKMEDYGLPFMCHAGVSTAYIILQLPAPDFRAYLIGGLIALVAVAVSVVYIYNIFKIDIVLWYRSAFHSTETIVDGKLYDAYVLYPKPHKESQRHAVDALVLNILPEVLERQCGYKLFIFGRDEFPGQAVANVIDENVKLCRRLIVIVVPESLGFGLLKNLSEEQIAVYSALIQDGMKVILIELEKIEDYTVMPESIQYIKQKHGAIRWHGDFTEQSQCMKTKFWKTVRYHMPPRRCRPFPPVQLLQHTPCYRTAGPELGSRRKKCTLTTG</sequence>
<feature type="signal peptide" evidence="2">
    <location>
        <begin position="1"/>
        <end position="19"/>
    </location>
</feature>
<feature type="chain" id="PRO_0000015445" description="Interleukin-1 receptor-like 2">
    <location>
        <begin position="20"/>
        <end position="575"/>
    </location>
</feature>
<feature type="topological domain" description="Extracellular" evidence="2">
    <location>
        <begin position="20"/>
        <end position="335"/>
    </location>
</feature>
<feature type="transmembrane region" description="Helical" evidence="2">
    <location>
        <begin position="336"/>
        <end position="356"/>
    </location>
</feature>
<feature type="topological domain" description="Cytoplasmic" evidence="2">
    <location>
        <begin position="357"/>
        <end position="575"/>
    </location>
</feature>
<feature type="domain" description="Ig-like C2-type 1">
    <location>
        <begin position="20"/>
        <end position="111"/>
    </location>
</feature>
<feature type="domain" description="Ig-like C2-type 2">
    <location>
        <begin position="126"/>
        <end position="211"/>
    </location>
</feature>
<feature type="domain" description="Ig-like C2-type 3">
    <location>
        <begin position="222"/>
        <end position="318"/>
    </location>
</feature>
<feature type="domain" description="TIR" evidence="4">
    <location>
        <begin position="381"/>
        <end position="536"/>
    </location>
</feature>
<feature type="active site" evidence="4">
    <location>
        <position position="467"/>
    </location>
</feature>
<feature type="glycosylation site" description="N-linked (GlcNAc...) asparagine" evidence="2">
    <location>
        <position position="41"/>
    </location>
</feature>
<feature type="glycosylation site" description="N-linked (GlcNAc...) asparagine" evidence="2">
    <location>
        <position position="59"/>
    </location>
</feature>
<feature type="glycosylation site" description="N-linked (GlcNAc...) asparagine" evidence="2">
    <location>
        <position position="109"/>
    </location>
</feature>
<feature type="glycosylation site" description="N-linked (GlcNAc...) asparagine" evidence="2">
    <location>
        <position position="127"/>
    </location>
</feature>
<feature type="glycosylation site" description="N-linked (GlcNAc...) asparagine" evidence="2">
    <location>
        <position position="184"/>
    </location>
</feature>
<feature type="glycosylation site" description="N-linked (GlcNAc...) asparagine" evidence="2">
    <location>
        <position position="234"/>
    </location>
</feature>
<feature type="glycosylation site" description="N-linked (GlcNAc...) asparagine" evidence="2">
    <location>
        <position position="250"/>
    </location>
</feature>
<feature type="glycosylation site" description="N-linked (GlcNAc...) asparagine" evidence="2">
    <location>
        <position position="266"/>
    </location>
</feature>
<feature type="glycosylation site" description="N-linked (GlcNAc...) asparagine" evidence="2">
    <location>
        <position position="299"/>
    </location>
</feature>
<feature type="disulfide bond" evidence="3">
    <location>
        <begin position="42"/>
        <end position="95"/>
    </location>
</feature>
<feature type="disulfide bond" evidence="3">
    <location>
        <begin position="146"/>
        <end position="195"/>
    </location>
</feature>
<feature type="disulfide bond" evidence="3">
    <location>
        <begin position="249"/>
        <end position="316"/>
    </location>
</feature>
<feature type="splice variant" id="VSP_056292" description="In isoform 2." evidence="9">
    <original>MWSLLLCGLSIALPLSVTADGCKDIFMKNEILSASQPFAFNCTFPP</original>
    <variation>MTGLVSLSYFPLSTRSCALQSCSPVWGCGPCCSAGCPSPFHCLSQQ</variation>
    <location>
        <begin position="1"/>
        <end position="46"/>
    </location>
</feature>
<feature type="splice variant" id="VSP_056293" description="In isoform 2." evidence="9">
    <location>
        <begin position="47"/>
        <end position="163"/>
    </location>
</feature>
<feature type="splice variant" id="VSP_056294" description="In isoform 2." evidence="9">
    <original>TE</original>
    <variation>K</variation>
    <location>
        <begin position="217"/>
        <end position="218"/>
    </location>
</feature>
<feature type="sequence variant" id="VAR_053378" description="In dbSNP:rs13405631.">
    <original>I</original>
    <variation>T</variation>
    <location>
        <position position="237"/>
    </location>
</feature>
<feature type="sequence variant" id="VAR_025259" description="In dbSNP:rs33946385." evidence="8">
    <original>V</original>
    <variation>I</variation>
    <location>
        <position position="352"/>
    </location>
</feature>
<feature type="sequence variant" id="VAR_025260" description="In dbSNP:rs2302612." evidence="8">
    <original>L</original>
    <variation>P</variation>
    <location>
        <position position="550"/>
    </location>
</feature>
<feature type="sequence conflict" description="In Ref. 1; AAG21368." evidence="10" ref="1">
    <original>I</original>
    <variation>V</variation>
    <location>
        <position position="486"/>
    </location>
</feature>
<feature type="sequence conflict" description="In Ref. 2." evidence="10" ref="2">
    <original>PPVQLLQHTPCY</original>
    <variation>LRSTCRSTHLCTA</variation>
    <location>
        <begin position="545"/>
        <end position="556"/>
    </location>
</feature>
<feature type="sequence conflict" description="In Ref. 1; AAG21368." evidence="10" ref="1">
    <original>Y</original>
    <variation>C</variation>
    <location>
        <position position="556"/>
    </location>
</feature>
<feature type="strand" evidence="11">
    <location>
        <begin position="23"/>
        <end position="26"/>
    </location>
</feature>
<feature type="strand" evidence="11">
    <location>
        <begin position="31"/>
        <end position="36"/>
    </location>
</feature>
<feature type="strand" evidence="11">
    <location>
        <begin position="38"/>
        <end position="41"/>
    </location>
</feature>
<feature type="helix" evidence="11">
    <location>
        <begin position="47"/>
        <end position="49"/>
    </location>
</feature>
<feature type="strand" evidence="11">
    <location>
        <begin position="53"/>
        <end position="59"/>
    </location>
</feature>
<feature type="strand" evidence="11">
    <location>
        <begin position="61"/>
        <end position="63"/>
    </location>
</feature>
<feature type="strand" evidence="11">
    <location>
        <begin position="71"/>
        <end position="76"/>
    </location>
</feature>
<feature type="strand" evidence="11">
    <location>
        <begin position="79"/>
        <end position="82"/>
    </location>
</feature>
<feature type="strand" evidence="11">
    <location>
        <begin position="91"/>
        <end position="98"/>
    </location>
</feature>
<feature type="strand" evidence="11">
    <location>
        <begin position="103"/>
        <end position="113"/>
    </location>
</feature>
<feature type="turn" evidence="11">
    <location>
        <begin position="117"/>
        <end position="119"/>
    </location>
</feature>
<feature type="helix" evidence="11">
    <location>
        <begin position="130"/>
        <end position="132"/>
    </location>
</feature>
<feature type="strand" evidence="11">
    <location>
        <begin position="133"/>
        <end position="135"/>
    </location>
</feature>
<feature type="strand" evidence="11">
    <location>
        <begin position="142"/>
        <end position="145"/>
    </location>
</feature>
<feature type="strand" evidence="11">
    <location>
        <begin position="154"/>
        <end position="163"/>
    </location>
</feature>
<feature type="strand" evidence="11">
    <location>
        <begin position="173"/>
        <end position="176"/>
    </location>
</feature>
<feature type="strand" evidence="11">
    <location>
        <begin position="179"/>
        <end position="184"/>
    </location>
</feature>
<feature type="helix" evidence="11">
    <location>
        <begin position="187"/>
        <end position="189"/>
    </location>
</feature>
<feature type="strand" evidence="11">
    <location>
        <begin position="191"/>
        <end position="201"/>
    </location>
</feature>
<feature type="strand" evidence="11">
    <location>
        <begin position="204"/>
        <end position="215"/>
    </location>
</feature>
<dbReference type="EC" id="3.2.2.6" evidence="4"/>
<dbReference type="EMBL" id="AF284434">
    <property type="protein sequence ID" value="AAG21368.1"/>
    <property type="molecule type" value="mRNA"/>
</dbReference>
<dbReference type="EMBL" id="U49065">
    <property type="protein sequence ID" value="AAB53237.1"/>
    <property type="status" value="ALT_FRAME"/>
    <property type="molecule type" value="mRNA"/>
</dbReference>
<dbReference type="EMBL" id="DQ131903">
    <property type="protein sequence ID" value="AAZ38712.1"/>
    <property type="molecule type" value="Genomic_DNA"/>
</dbReference>
<dbReference type="EMBL" id="AC007271">
    <property type="protein sequence ID" value="AAX81989.1"/>
    <property type="molecule type" value="Genomic_DNA"/>
</dbReference>
<dbReference type="EMBL" id="AC007248">
    <property type="protein sequence ID" value="AAY15046.1"/>
    <property type="molecule type" value="Genomic_DNA"/>
</dbReference>
<dbReference type="EMBL" id="BC107064">
    <property type="protein sequence ID" value="AAI07065.1"/>
    <property type="molecule type" value="mRNA"/>
</dbReference>
<dbReference type="CCDS" id="CCDS2056.1">
    <molecule id="Q9HB29-1"/>
</dbReference>
<dbReference type="CCDS" id="CCDS86867.1">
    <molecule id="Q9HB29-2"/>
</dbReference>
<dbReference type="PIR" id="G02426">
    <property type="entry name" value="G02426"/>
</dbReference>
<dbReference type="RefSeq" id="NP_001338375.1">
    <molecule id="Q9HB29-1"/>
    <property type="nucleotide sequence ID" value="NM_001351446.2"/>
</dbReference>
<dbReference type="RefSeq" id="NP_001338376.1">
    <molecule id="Q9HB29-2"/>
    <property type="nucleotide sequence ID" value="NM_001351447.1"/>
</dbReference>
<dbReference type="RefSeq" id="NP_003845.2">
    <molecule id="Q9HB29-1"/>
    <property type="nucleotide sequence ID" value="NM_003854.2"/>
</dbReference>
<dbReference type="RefSeq" id="XP_005264093.1">
    <property type="nucleotide sequence ID" value="XM_005264036.1"/>
</dbReference>
<dbReference type="PDB" id="6U6U">
    <property type="method" value="X-ray"/>
    <property type="resolution" value="2.31 A"/>
    <property type="chains" value="R=21-215"/>
</dbReference>
<dbReference type="PDB" id="9ETH">
    <property type="method" value="X-ray"/>
    <property type="resolution" value="2.30 A"/>
    <property type="chains" value="R=20-220"/>
</dbReference>
<dbReference type="PDB" id="9ETI">
    <property type="method" value="X-ray"/>
    <property type="resolution" value="2.40 A"/>
    <property type="chains" value="R=20-220"/>
</dbReference>
<dbReference type="PDBsum" id="6U6U"/>
<dbReference type="PDBsum" id="9ETH"/>
<dbReference type="PDBsum" id="9ETI"/>
<dbReference type="SMR" id="Q9HB29"/>
<dbReference type="BioGRID" id="114336">
    <property type="interactions" value="25"/>
</dbReference>
<dbReference type="ComplexPortal" id="CPX-10338">
    <property type="entry name" value="Interleukin-36A receptor ligand complex"/>
</dbReference>
<dbReference type="ComplexPortal" id="CPX-10340">
    <property type="entry name" value="Interleukin-36B receptor ligand complex"/>
</dbReference>
<dbReference type="ComplexPortal" id="CPX-10341">
    <property type="entry name" value="Interleukin-36G receptor ligand complex"/>
</dbReference>
<dbReference type="ComplexPortal" id="CPX-10343">
    <property type="entry name" value="Interleukin-36 antagonist complex"/>
</dbReference>
<dbReference type="CORUM" id="Q9HB29"/>
<dbReference type="FunCoup" id="Q9HB29">
    <property type="interactions" value="747"/>
</dbReference>
<dbReference type="IntAct" id="Q9HB29">
    <property type="interactions" value="6"/>
</dbReference>
<dbReference type="STRING" id="9606.ENSP00000264257"/>
<dbReference type="ChEMBL" id="CHEMBL4665591"/>
<dbReference type="DrugBank" id="DB15626">
    <property type="generic name" value="Spesolimab"/>
</dbReference>
<dbReference type="DrugCentral" id="Q9HB29"/>
<dbReference type="GuidetoPHARMACOLOGY" id="1736"/>
<dbReference type="GlyCosmos" id="Q9HB29">
    <property type="glycosylation" value="9 sites, No reported glycans"/>
</dbReference>
<dbReference type="GlyGen" id="Q9HB29">
    <property type="glycosylation" value="9 sites"/>
</dbReference>
<dbReference type="iPTMnet" id="Q9HB29"/>
<dbReference type="PhosphoSitePlus" id="Q9HB29"/>
<dbReference type="BioMuta" id="IL1RL2"/>
<dbReference type="DMDM" id="90110768"/>
<dbReference type="jPOST" id="Q9HB29"/>
<dbReference type="MassIVE" id="Q9HB29"/>
<dbReference type="PaxDb" id="9606-ENSP00000264257"/>
<dbReference type="PeptideAtlas" id="Q9HB29"/>
<dbReference type="ABCD" id="Q9HB29">
    <property type="antibodies" value="19 sequenced antibodies"/>
</dbReference>
<dbReference type="Antibodypedia" id="2361">
    <property type="antibodies" value="300 antibodies from 34 providers"/>
</dbReference>
<dbReference type="DNASU" id="8808"/>
<dbReference type="Ensembl" id="ENST00000264257.7">
    <molecule id="Q9HB29-1"/>
    <property type="protein sequence ID" value="ENSP00000264257.2"/>
    <property type="gene ID" value="ENSG00000115598.10"/>
</dbReference>
<dbReference type="Ensembl" id="ENST00000441515.3">
    <molecule id="Q9HB29-2"/>
    <property type="protein sequence ID" value="ENSP00000413348.2"/>
    <property type="gene ID" value="ENSG00000115598.10"/>
</dbReference>
<dbReference type="GeneID" id="8808"/>
<dbReference type="KEGG" id="hsa:8808"/>
<dbReference type="MANE-Select" id="ENST00000264257.7">
    <property type="protein sequence ID" value="ENSP00000264257.2"/>
    <property type="RefSeq nucleotide sequence ID" value="NM_003854.4"/>
    <property type="RefSeq protein sequence ID" value="NP_003845.2"/>
</dbReference>
<dbReference type="UCSC" id="uc002tbs.4">
    <molecule id="Q9HB29-1"/>
    <property type="organism name" value="human"/>
</dbReference>
<dbReference type="AGR" id="HGNC:5999"/>
<dbReference type="CTD" id="8808"/>
<dbReference type="DisGeNET" id="8808"/>
<dbReference type="GeneCards" id="IL1RL2"/>
<dbReference type="HGNC" id="HGNC:5999">
    <property type="gene designation" value="IL1RL2"/>
</dbReference>
<dbReference type="HPA" id="ENSG00000115598">
    <property type="expression patterns" value="Tissue enhanced (skin)"/>
</dbReference>
<dbReference type="MIM" id="604512">
    <property type="type" value="gene"/>
</dbReference>
<dbReference type="neXtProt" id="NX_Q9HB29"/>
<dbReference type="OpenTargets" id="ENSG00000115598"/>
<dbReference type="PharmGKB" id="PA29815"/>
<dbReference type="VEuPathDB" id="HostDB:ENSG00000115598"/>
<dbReference type="eggNOG" id="ENOG502QWEU">
    <property type="taxonomic scope" value="Eukaryota"/>
</dbReference>
<dbReference type="GeneTree" id="ENSGT01090000259985"/>
<dbReference type="HOGENOM" id="CLU_025552_3_0_1"/>
<dbReference type="InParanoid" id="Q9HB29"/>
<dbReference type="OMA" id="CHLNFPQ"/>
<dbReference type="OrthoDB" id="6132459at2759"/>
<dbReference type="PAN-GO" id="Q9HB29">
    <property type="GO annotations" value="1 GO annotation based on evolutionary models"/>
</dbReference>
<dbReference type="PhylomeDB" id="Q9HB29"/>
<dbReference type="TreeFam" id="TF325519"/>
<dbReference type="PathwayCommons" id="Q9HB29"/>
<dbReference type="Reactome" id="R-HSA-9007892">
    <property type="pathway name" value="Interleukin-38 signaling"/>
</dbReference>
<dbReference type="Reactome" id="R-HSA-9014826">
    <property type="pathway name" value="Interleukin-36 pathway"/>
</dbReference>
<dbReference type="SignaLink" id="Q9HB29"/>
<dbReference type="BioGRID-ORCS" id="8808">
    <property type="hits" value="16 hits in 1139 CRISPR screens"/>
</dbReference>
<dbReference type="ChiTaRS" id="IL1RL2">
    <property type="organism name" value="human"/>
</dbReference>
<dbReference type="GeneWiki" id="IL1RL2"/>
<dbReference type="GenomeRNAi" id="8808"/>
<dbReference type="Pharos" id="Q9HB29">
    <property type="development level" value="Tbio"/>
</dbReference>
<dbReference type="PRO" id="PR:Q9HB29"/>
<dbReference type="Proteomes" id="UP000005640">
    <property type="component" value="Chromosome 2"/>
</dbReference>
<dbReference type="RNAct" id="Q9HB29">
    <property type="molecule type" value="protein"/>
</dbReference>
<dbReference type="Bgee" id="ENSG00000115598">
    <property type="expression patterns" value="Expressed in male germ line stem cell (sensu Vertebrata) in testis and 92 other cell types or tissues"/>
</dbReference>
<dbReference type="ExpressionAtlas" id="Q9HB29">
    <property type="expression patterns" value="baseline and differential"/>
</dbReference>
<dbReference type="GO" id="GO:0009986">
    <property type="term" value="C:cell surface"/>
    <property type="evidence" value="ECO:0000318"/>
    <property type="project" value="GO_Central"/>
</dbReference>
<dbReference type="GO" id="GO:0005886">
    <property type="term" value="C:plasma membrane"/>
    <property type="evidence" value="ECO:0000318"/>
    <property type="project" value="GO_Central"/>
</dbReference>
<dbReference type="GO" id="GO:0004908">
    <property type="term" value="F:interleukin-1 receptor activity"/>
    <property type="evidence" value="ECO:0000304"/>
    <property type="project" value="ProtInc"/>
</dbReference>
<dbReference type="GO" id="GO:0004909">
    <property type="term" value="F:interleukin-1, type I, activating receptor activity"/>
    <property type="evidence" value="ECO:0007669"/>
    <property type="project" value="InterPro"/>
</dbReference>
<dbReference type="GO" id="GO:0061809">
    <property type="term" value="F:NAD+ nucleosidase activity, cyclic ADP-ribose generating"/>
    <property type="evidence" value="ECO:0007669"/>
    <property type="project" value="UniProtKB-EC"/>
</dbReference>
<dbReference type="GO" id="GO:0007166">
    <property type="term" value="P:cell surface receptor signaling pathway"/>
    <property type="evidence" value="ECO:0000318"/>
    <property type="project" value="GO_Central"/>
</dbReference>
<dbReference type="GO" id="GO:0006968">
    <property type="term" value="P:cellular defense response"/>
    <property type="evidence" value="ECO:0000304"/>
    <property type="project" value="ProtInc"/>
</dbReference>
<dbReference type="GO" id="GO:0006954">
    <property type="term" value="P:inflammatory response"/>
    <property type="evidence" value="ECO:0007669"/>
    <property type="project" value="UniProtKB-KW"/>
</dbReference>
<dbReference type="GO" id="GO:0045087">
    <property type="term" value="P:innate immune response"/>
    <property type="evidence" value="ECO:0007669"/>
    <property type="project" value="UniProtKB-KW"/>
</dbReference>
<dbReference type="GO" id="GO:0032755">
    <property type="term" value="P:positive regulation of interleukin-6 production"/>
    <property type="evidence" value="ECO:0007669"/>
    <property type="project" value="Ensembl"/>
</dbReference>
<dbReference type="GO" id="GO:0045582">
    <property type="term" value="P:positive regulation of T cell differentiation"/>
    <property type="evidence" value="ECO:0007669"/>
    <property type="project" value="Ensembl"/>
</dbReference>
<dbReference type="GO" id="GO:0050727">
    <property type="term" value="P:regulation of inflammatory response"/>
    <property type="evidence" value="ECO:0000318"/>
    <property type="project" value="GO_Central"/>
</dbReference>
<dbReference type="GO" id="GO:0007165">
    <property type="term" value="P:signal transduction"/>
    <property type="evidence" value="ECO:0000304"/>
    <property type="project" value="ProtInc"/>
</dbReference>
<dbReference type="CDD" id="cd05757">
    <property type="entry name" value="Ig2_IL1R-like"/>
    <property type="match status" value="1"/>
</dbReference>
<dbReference type="FunFam" id="3.40.50.10140:FF:000002">
    <property type="entry name" value="Interleukin 1 receptor accessory protein"/>
    <property type="match status" value="1"/>
</dbReference>
<dbReference type="FunFam" id="2.60.40.10:FF:001096">
    <property type="entry name" value="Interleukin 1 receptor like 2"/>
    <property type="match status" value="1"/>
</dbReference>
<dbReference type="FunFam" id="2.60.40.10:FF:001302">
    <property type="entry name" value="Interleukin 1 receptor like 2"/>
    <property type="match status" value="1"/>
</dbReference>
<dbReference type="FunFam" id="2.60.40.10:FF:000188">
    <property type="entry name" value="Interleukin-1 receptor accessory protein-like 1"/>
    <property type="match status" value="1"/>
</dbReference>
<dbReference type="Gene3D" id="2.60.40.10">
    <property type="entry name" value="Immunoglobulins"/>
    <property type="match status" value="3"/>
</dbReference>
<dbReference type="Gene3D" id="3.40.50.10140">
    <property type="entry name" value="Toll/interleukin-1 receptor homology (TIR) domain"/>
    <property type="match status" value="1"/>
</dbReference>
<dbReference type="InterPro" id="IPR007110">
    <property type="entry name" value="Ig-like_dom"/>
</dbReference>
<dbReference type="InterPro" id="IPR036179">
    <property type="entry name" value="Ig-like_dom_sf"/>
</dbReference>
<dbReference type="InterPro" id="IPR013783">
    <property type="entry name" value="Ig-like_fold"/>
</dbReference>
<dbReference type="InterPro" id="IPR003599">
    <property type="entry name" value="Ig_sub"/>
</dbReference>
<dbReference type="InterPro" id="IPR015621">
    <property type="entry name" value="IL-1_rcpt_fam"/>
</dbReference>
<dbReference type="InterPro" id="IPR004076">
    <property type="entry name" value="IL-1_rcpt_I-typ"/>
</dbReference>
<dbReference type="InterPro" id="IPR004074">
    <property type="entry name" value="IL-1_rcpt_I/II-typ"/>
</dbReference>
<dbReference type="InterPro" id="IPR000157">
    <property type="entry name" value="TIR_dom"/>
</dbReference>
<dbReference type="InterPro" id="IPR035897">
    <property type="entry name" value="Toll_tir_struct_dom_sf"/>
</dbReference>
<dbReference type="PANTHER" id="PTHR11890">
    <property type="entry name" value="INTERLEUKIN-1 RECEPTOR FAMILY MEMBER"/>
    <property type="match status" value="1"/>
</dbReference>
<dbReference type="PANTHER" id="PTHR11890:SF9">
    <property type="entry name" value="INTERLEUKIN-1 RECEPTOR-LIKE 2"/>
    <property type="match status" value="1"/>
</dbReference>
<dbReference type="Pfam" id="PF13895">
    <property type="entry name" value="Ig_2"/>
    <property type="match status" value="1"/>
</dbReference>
<dbReference type="Pfam" id="PF01582">
    <property type="entry name" value="TIR"/>
    <property type="match status" value="1"/>
</dbReference>
<dbReference type="PRINTS" id="PR01538">
    <property type="entry name" value="INTRLEUKN1R1"/>
</dbReference>
<dbReference type="PRINTS" id="PR01536">
    <property type="entry name" value="INTRLKN1R12F"/>
</dbReference>
<dbReference type="PRINTS" id="PR01537">
    <property type="entry name" value="INTRLKN1R1F"/>
</dbReference>
<dbReference type="SMART" id="SM00409">
    <property type="entry name" value="IG"/>
    <property type="match status" value="3"/>
</dbReference>
<dbReference type="SMART" id="SM00255">
    <property type="entry name" value="TIR"/>
    <property type="match status" value="1"/>
</dbReference>
<dbReference type="SUPFAM" id="SSF48726">
    <property type="entry name" value="Immunoglobulin"/>
    <property type="match status" value="3"/>
</dbReference>
<dbReference type="SUPFAM" id="SSF52200">
    <property type="entry name" value="Toll/Interleukin receptor TIR domain"/>
    <property type="match status" value="1"/>
</dbReference>
<dbReference type="PROSITE" id="PS50835">
    <property type="entry name" value="IG_LIKE"/>
    <property type="match status" value="2"/>
</dbReference>
<dbReference type="PROSITE" id="PS50104">
    <property type="entry name" value="TIR"/>
    <property type="match status" value="1"/>
</dbReference>